<comment type="similarity">
    <text evidence="1">Belongs to the bacterial ribosomal protein bS21 family.</text>
</comment>
<gene>
    <name evidence="1" type="primary">rpsU</name>
    <name type="ordered locus">LAR_0699</name>
</gene>
<organism>
    <name type="scientific">Limosilactobacillus reuteri subsp. reuteri (strain JCM 1112)</name>
    <name type="common">Lactobacillus reuteri</name>
    <dbReference type="NCBI Taxonomy" id="557433"/>
    <lineage>
        <taxon>Bacteria</taxon>
        <taxon>Bacillati</taxon>
        <taxon>Bacillota</taxon>
        <taxon>Bacilli</taxon>
        <taxon>Lactobacillales</taxon>
        <taxon>Lactobacillaceae</taxon>
        <taxon>Limosilactobacillus</taxon>
    </lineage>
</organism>
<accession>B2G6Y3</accession>
<feature type="chain" id="PRO_1000120634" description="Small ribosomal subunit protein bS21">
    <location>
        <begin position="1"/>
        <end position="63"/>
    </location>
</feature>
<feature type="region of interest" description="Disordered" evidence="2">
    <location>
        <begin position="40"/>
        <end position="63"/>
    </location>
</feature>
<feature type="compositionally biased region" description="Basic and acidic residues" evidence="2">
    <location>
        <begin position="40"/>
        <end position="52"/>
    </location>
</feature>
<feature type="compositionally biased region" description="Basic residues" evidence="2">
    <location>
        <begin position="53"/>
        <end position="63"/>
    </location>
</feature>
<evidence type="ECO:0000255" key="1">
    <source>
        <dbReference type="HAMAP-Rule" id="MF_00358"/>
    </source>
</evidence>
<evidence type="ECO:0000256" key="2">
    <source>
        <dbReference type="SAM" id="MobiDB-lite"/>
    </source>
</evidence>
<evidence type="ECO:0000305" key="3"/>
<proteinExistence type="inferred from homology"/>
<dbReference type="EMBL" id="AP007281">
    <property type="protein sequence ID" value="BAG25215.1"/>
    <property type="molecule type" value="Genomic_DNA"/>
</dbReference>
<dbReference type="RefSeq" id="WP_003665847.1">
    <property type="nucleotide sequence ID" value="NC_010609.1"/>
</dbReference>
<dbReference type="SMR" id="B2G6Y3"/>
<dbReference type="GeneID" id="78173499"/>
<dbReference type="KEGG" id="lrf:LAR_0699"/>
<dbReference type="HOGENOM" id="CLU_159258_3_2_9"/>
<dbReference type="GO" id="GO:1990904">
    <property type="term" value="C:ribonucleoprotein complex"/>
    <property type="evidence" value="ECO:0007669"/>
    <property type="project" value="UniProtKB-KW"/>
</dbReference>
<dbReference type="GO" id="GO:0005840">
    <property type="term" value="C:ribosome"/>
    <property type="evidence" value="ECO:0007669"/>
    <property type="project" value="UniProtKB-KW"/>
</dbReference>
<dbReference type="GO" id="GO:0003735">
    <property type="term" value="F:structural constituent of ribosome"/>
    <property type="evidence" value="ECO:0007669"/>
    <property type="project" value="InterPro"/>
</dbReference>
<dbReference type="GO" id="GO:0006412">
    <property type="term" value="P:translation"/>
    <property type="evidence" value="ECO:0007669"/>
    <property type="project" value="UniProtKB-UniRule"/>
</dbReference>
<dbReference type="Gene3D" id="1.20.5.1150">
    <property type="entry name" value="Ribosomal protein S8"/>
    <property type="match status" value="1"/>
</dbReference>
<dbReference type="HAMAP" id="MF_00358">
    <property type="entry name" value="Ribosomal_bS21"/>
    <property type="match status" value="1"/>
</dbReference>
<dbReference type="InterPro" id="IPR001911">
    <property type="entry name" value="Ribosomal_bS21"/>
</dbReference>
<dbReference type="InterPro" id="IPR018278">
    <property type="entry name" value="Ribosomal_bS21_CS"/>
</dbReference>
<dbReference type="InterPro" id="IPR038380">
    <property type="entry name" value="Ribosomal_bS21_sf"/>
</dbReference>
<dbReference type="NCBIfam" id="TIGR00030">
    <property type="entry name" value="S21p"/>
    <property type="match status" value="1"/>
</dbReference>
<dbReference type="PANTHER" id="PTHR21109">
    <property type="entry name" value="MITOCHONDRIAL 28S RIBOSOMAL PROTEIN S21"/>
    <property type="match status" value="1"/>
</dbReference>
<dbReference type="PANTHER" id="PTHR21109:SF22">
    <property type="entry name" value="SMALL RIBOSOMAL SUBUNIT PROTEIN BS21"/>
    <property type="match status" value="1"/>
</dbReference>
<dbReference type="Pfam" id="PF01165">
    <property type="entry name" value="Ribosomal_S21"/>
    <property type="match status" value="1"/>
</dbReference>
<dbReference type="PRINTS" id="PR00976">
    <property type="entry name" value="RIBOSOMALS21"/>
</dbReference>
<dbReference type="PROSITE" id="PS01181">
    <property type="entry name" value="RIBOSOMAL_S21"/>
    <property type="match status" value="1"/>
</dbReference>
<reference key="1">
    <citation type="journal article" date="2008" name="DNA Res.">
        <title>Comparative genome analysis of Lactobacillus reuteri and Lactobacillus fermentum reveal a genomic island for reuterin and cobalamin production.</title>
        <authorList>
            <person name="Morita H."/>
            <person name="Toh H."/>
            <person name="Fukuda S."/>
            <person name="Horikawa H."/>
            <person name="Oshima K."/>
            <person name="Suzuki T."/>
            <person name="Murakami M."/>
            <person name="Hisamatsu S."/>
            <person name="Kato Y."/>
            <person name="Takizawa T."/>
            <person name="Fukuoka H."/>
            <person name="Yoshimura T."/>
            <person name="Itoh K."/>
            <person name="O'Sullivan D.J."/>
            <person name="McKay L.L."/>
            <person name="Ohno H."/>
            <person name="Kikuchi J."/>
            <person name="Masaoka T."/>
            <person name="Hattori M."/>
        </authorList>
    </citation>
    <scope>NUCLEOTIDE SEQUENCE [LARGE SCALE GENOMIC DNA]</scope>
    <source>
        <strain>JCM 1112</strain>
    </source>
</reference>
<name>RS21_LIMRJ</name>
<keyword id="KW-0687">Ribonucleoprotein</keyword>
<keyword id="KW-0689">Ribosomal protein</keyword>
<protein>
    <recommendedName>
        <fullName evidence="1">Small ribosomal subunit protein bS21</fullName>
    </recommendedName>
    <alternativeName>
        <fullName evidence="3">30S ribosomal protein S21</fullName>
    </alternativeName>
</protein>
<sequence>MSKTVVRKNESLDDALRRFKRSVSRNGTLQEYRKREFYEKPSVKRKLKSEAARKRKNKRGRRY</sequence>